<comment type="function">
    <text evidence="1">Binds and compact DNA (95 to 150 base pairs) to form nucleosome-like structures that contain positive DNA supercoils. Increases the resistance of DNA to thermal denaturation (in vitro).</text>
</comment>
<comment type="subunit">
    <text evidence="1">Homodimer or heterodimer with another histone. Dimers then assemble into higher oligomers, with the DNA wrapped around the protein core (By similarity).</text>
</comment>
<comment type="subcellular location">
    <subcellularLocation>
        <location evidence="2">Cytoplasm</location>
    </subcellularLocation>
    <subcellularLocation>
        <location evidence="2">Chromosome</location>
    </subcellularLocation>
</comment>
<comment type="similarity">
    <text evidence="2">Belongs to the archaeal histone HMF family.</text>
</comment>
<reference key="1">
    <citation type="journal article" date="1994" name="Gene">
        <title>Histone-encoding genes from Pyrococcus: evidence for members of the HMf family of archaeal histones in a non-methanogenic Archaeon.</title>
        <authorList>
            <person name="Sandman K.M."/>
            <person name="Perler F.B."/>
            <person name="Reeve J.N."/>
        </authorList>
    </citation>
    <scope>NUCLEOTIDE SEQUENCE [GENOMIC DNA]</scope>
</reference>
<gene>
    <name type="primary">hpyA1</name>
</gene>
<keyword id="KW-0158">Chromosome</keyword>
<keyword id="KW-0963">Cytoplasm</keyword>
<keyword id="KW-0238">DNA-binding</keyword>
<dbReference type="EMBL" id="U08837">
    <property type="protein sequence ID" value="AAA73426.1"/>
    <property type="molecule type" value="Genomic_DNA"/>
</dbReference>
<dbReference type="SMR" id="P50485"/>
<dbReference type="GO" id="GO:0005694">
    <property type="term" value="C:chromosome"/>
    <property type="evidence" value="ECO:0007669"/>
    <property type="project" value="UniProtKB-SubCell"/>
</dbReference>
<dbReference type="GO" id="GO:0005737">
    <property type="term" value="C:cytoplasm"/>
    <property type="evidence" value="ECO:0007669"/>
    <property type="project" value="UniProtKB-SubCell"/>
</dbReference>
<dbReference type="GO" id="GO:0003677">
    <property type="term" value="F:DNA binding"/>
    <property type="evidence" value="ECO:0007669"/>
    <property type="project" value="UniProtKB-KW"/>
</dbReference>
<dbReference type="GO" id="GO:0046982">
    <property type="term" value="F:protein heterodimerization activity"/>
    <property type="evidence" value="ECO:0007669"/>
    <property type="project" value="InterPro"/>
</dbReference>
<dbReference type="CDD" id="cd22909">
    <property type="entry name" value="HFD_archaea_histone-like"/>
    <property type="match status" value="1"/>
</dbReference>
<dbReference type="Gene3D" id="1.10.20.10">
    <property type="entry name" value="Histone, subunit A"/>
    <property type="match status" value="1"/>
</dbReference>
<dbReference type="InterPro" id="IPR050947">
    <property type="entry name" value="Archaeal_histone_HMF"/>
</dbReference>
<dbReference type="InterPro" id="IPR003958">
    <property type="entry name" value="CBFA_NFYB_domain"/>
</dbReference>
<dbReference type="InterPro" id="IPR009072">
    <property type="entry name" value="Histone-fold"/>
</dbReference>
<dbReference type="InterPro" id="IPR050004">
    <property type="entry name" value="HmfB-like"/>
</dbReference>
<dbReference type="NCBIfam" id="NF043032">
    <property type="entry name" value="archaea_histone"/>
    <property type="match status" value="1"/>
</dbReference>
<dbReference type="PANTHER" id="PTHR47828">
    <property type="entry name" value="ARCHAEAL HISTONE A"/>
    <property type="match status" value="1"/>
</dbReference>
<dbReference type="PANTHER" id="PTHR47828:SF1">
    <property type="entry name" value="ARCHAEAL HISTONE A"/>
    <property type="match status" value="1"/>
</dbReference>
<dbReference type="Pfam" id="PF00808">
    <property type="entry name" value="CBFD_NFYB_HMF"/>
    <property type="match status" value="1"/>
</dbReference>
<dbReference type="SUPFAM" id="SSF47113">
    <property type="entry name" value="Histone-fold"/>
    <property type="match status" value="1"/>
</dbReference>
<accession>P50485</accession>
<sequence>MGELPIAPVDRLIRKAGAERVSEEAAKILAEYLEEYAIEVSKKAVEFARHAGRKTVKAEDIKLAIKS</sequence>
<protein>
    <recommendedName>
        <fullName>Archaeal histone A</fullName>
    </recommendedName>
    <alternativeName>
        <fullName>Archaeal histone A1</fullName>
    </alternativeName>
</protein>
<proteinExistence type="inferred from homology"/>
<name>HARA_PYRSG</name>
<evidence type="ECO:0000250" key="1">
    <source>
        <dbReference type="UniProtKB" id="P19267"/>
    </source>
</evidence>
<evidence type="ECO:0000305" key="2"/>
<feature type="chain" id="PRO_0000154998" description="Archaeal histone A">
    <location>
        <begin position="1"/>
        <end position="67"/>
    </location>
</feature>
<feature type="region of interest" description="Interaction with DNA" evidence="1">
    <location>
        <begin position="20"/>
        <end position="22"/>
    </location>
</feature>
<feature type="region of interest" description="Interaction with DNA" evidence="1">
    <location>
        <begin position="54"/>
        <end position="57"/>
    </location>
</feature>
<organism>
    <name type="scientific">Pyrococcus sp. (strain GB-3a)</name>
    <dbReference type="NCBI Taxonomy" id="55399"/>
    <lineage>
        <taxon>Archaea</taxon>
        <taxon>Methanobacteriati</taxon>
        <taxon>Methanobacteriota</taxon>
        <taxon>Thermococci</taxon>
        <taxon>Thermococcales</taxon>
        <taxon>Thermococcaceae</taxon>
        <taxon>Pyrococcus</taxon>
    </lineage>
</organism>